<gene>
    <name evidence="1" type="primary">RBCS2</name>
</gene>
<organism>
    <name type="scientific">Amaranthus hypochondriacus</name>
    <name type="common">Prince-of-Wales feather</name>
    <name type="synonym">Amaranthus hybridus var. hypochondriacus</name>
    <dbReference type="NCBI Taxonomy" id="28502"/>
    <lineage>
        <taxon>Eukaryota</taxon>
        <taxon>Viridiplantae</taxon>
        <taxon>Streptophyta</taxon>
        <taxon>Embryophyta</taxon>
        <taxon>Tracheophyta</taxon>
        <taxon>Spermatophyta</taxon>
        <taxon>Magnoliopsida</taxon>
        <taxon>eudicotyledons</taxon>
        <taxon>Gunneridae</taxon>
        <taxon>Pentapetalae</taxon>
        <taxon>Caryophyllales</taxon>
        <taxon>Amaranthaceae</taxon>
        <taxon>Amaranthus</taxon>
    </lineage>
</organism>
<evidence type="ECO:0000255" key="1">
    <source>
        <dbReference type="HAMAP-Rule" id="MF_00860"/>
    </source>
</evidence>
<sequence length="184" mass="20440">MASSMMSNAATAVAVAATSGGAQANMVAPFNGLKSIASFPVTRKSNDITSIASNGGRVQCMQVWPPVGKKKFETLSYLPPLSDAQLLAQVQYLLNKGWIPCIEFELEHPFVYRENHRSPGYQDGRYWTMWKLPMYGCTDPAQVLNEVEEAKKAYPTAFIRIIGFDNKRQVQCVSFIAYKPADSY</sequence>
<proteinExistence type="evidence at transcript level"/>
<feature type="transit peptide" description="Chloroplast" evidence="1">
    <location>
        <begin position="1"/>
        <end position="59"/>
    </location>
</feature>
<feature type="chain" id="PRO_0000031461" description="Ribulose bisphosphate carboxylase small subunit, chloroplastic 2" evidence="1">
    <location>
        <begin position="60"/>
        <end position="184"/>
    </location>
</feature>
<protein>
    <recommendedName>
        <fullName evidence="1">Ribulose bisphosphate carboxylase small subunit, chloroplastic 2</fullName>
        <shortName evidence="1">RuBisCO small subunit 2</shortName>
    </recommendedName>
</protein>
<reference key="1">
    <citation type="online journal article" date="1999" name="Plant Gene Register">
        <title>Three RbcS cDNAs from the C4 dicotyledonous plant Amaranthus hypochondriacus.</title>
        <authorList>
            <person name="Corey A.C."/>
            <person name="Dempsey D.A."/>
            <person name="Klessig D.F."/>
            <person name="Berry J.O."/>
        </authorList>
        <locator>PGR99-101</locator>
    </citation>
    <scope>NUCLEOTIDE SEQUENCE [MRNA]</scope>
    <source>
        <strain>R103</strain>
    </source>
</reference>
<dbReference type="EMBL" id="AF150666">
    <property type="protein sequence ID" value="AAD37439.1"/>
    <property type="molecule type" value="mRNA"/>
</dbReference>
<dbReference type="SMR" id="Q9XGX5"/>
<dbReference type="GO" id="GO:0009507">
    <property type="term" value="C:chloroplast"/>
    <property type="evidence" value="ECO:0007669"/>
    <property type="project" value="UniProtKB-SubCell"/>
</dbReference>
<dbReference type="GO" id="GO:0016984">
    <property type="term" value="F:ribulose-bisphosphate carboxylase activity"/>
    <property type="evidence" value="ECO:0007669"/>
    <property type="project" value="UniProtKB-UniRule"/>
</dbReference>
<dbReference type="GO" id="GO:0009853">
    <property type="term" value="P:photorespiration"/>
    <property type="evidence" value="ECO:0007669"/>
    <property type="project" value="UniProtKB-KW"/>
</dbReference>
<dbReference type="GO" id="GO:0019253">
    <property type="term" value="P:reductive pentose-phosphate cycle"/>
    <property type="evidence" value="ECO:0007669"/>
    <property type="project" value="UniProtKB-UniRule"/>
</dbReference>
<dbReference type="CDD" id="cd03527">
    <property type="entry name" value="RuBisCO_small"/>
    <property type="match status" value="1"/>
</dbReference>
<dbReference type="FunFam" id="3.30.190.10:FF:000001">
    <property type="entry name" value="Ribulose bisphosphate carboxylase small chain, chloroplastic"/>
    <property type="match status" value="1"/>
</dbReference>
<dbReference type="Gene3D" id="3.30.190.10">
    <property type="entry name" value="Ribulose bisphosphate carboxylase, small subunit"/>
    <property type="match status" value="1"/>
</dbReference>
<dbReference type="HAMAP" id="MF_00859">
    <property type="entry name" value="RuBisCO_S_bact"/>
    <property type="match status" value="1"/>
</dbReference>
<dbReference type="InterPro" id="IPR024681">
    <property type="entry name" value="RuBisCO_ssu"/>
</dbReference>
<dbReference type="InterPro" id="IPR000894">
    <property type="entry name" value="RuBisCO_ssu_dom"/>
</dbReference>
<dbReference type="InterPro" id="IPR024680">
    <property type="entry name" value="RuBisCO_ssu_N"/>
</dbReference>
<dbReference type="InterPro" id="IPR036385">
    <property type="entry name" value="RuBisCO_ssu_sf"/>
</dbReference>
<dbReference type="PANTHER" id="PTHR31262">
    <property type="entry name" value="RIBULOSE BISPHOSPHATE CARBOXYLASE SMALL CHAIN 1, CHLOROPLASTIC"/>
    <property type="match status" value="1"/>
</dbReference>
<dbReference type="PANTHER" id="PTHR31262:SF10">
    <property type="entry name" value="RIBULOSE BISPHOSPHATE CARBOXYLASE SMALL SUBUNIT 1A, CHLOROPLASTIC-RELATED"/>
    <property type="match status" value="1"/>
</dbReference>
<dbReference type="Pfam" id="PF12338">
    <property type="entry name" value="RbcS"/>
    <property type="match status" value="1"/>
</dbReference>
<dbReference type="Pfam" id="PF00101">
    <property type="entry name" value="RuBisCO_small"/>
    <property type="match status" value="1"/>
</dbReference>
<dbReference type="PRINTS" id="PR00152">
    <property type="entry name" value="RUBISCOSMALL"/>
</dbReference>
<dbReference type="SMART" id="SM00961">
    <property type="entry name" value="RuBisCO_small"/>
    <property type="match status" value="1"/>
</dbReference>
<dbReference type="SUPFAM" id="SSF55239">
    <property type="entry name" value="RuBisCO, small subunit"/>
    <property type="match status" value="1"/>
</dbReference>
<name>RBS2_AMAHP</name>
<keyword id="KW-0113">Calvin cycle</keyword>
<keyword id="KW-0120">Carbon dioxide fixation</keyword>
<keyword id="KW-0150">Chloroplast</keyword>
<keyword id="KW-0601">Photorespiration</keyword>
<keyword id="KW-0602">Photosynthesis</keyword>
<keyword id="KW-0934">Plastid</keyword>
<keyword id="KW-0809">Transit peptide</keyword>
<comment type="function">
    <text evidence="1">RuBisCO catalyzes two reactions: the carboxylation of D-ribulose 1,5-bisphosphate, the primary event in carbon dioxide fixation, as well as the oxidative fragmentation of the pentose substrate. Both reactions occur simultaneously and in competition at the same active site. Although the small subunit is not catalytic it is essential for maximal activity.</text>
</comment>
<comment type="subunit">
    <text evidence="1">Heterohexadecamer of 8 large and 8 small subunits.</text>
</comment>
<comment type="subcellular location">
    <subcellularLocation>
        <location evidence="1">Plastid</location>
        <location evidence="1">Chloroplast</location>
    </subcellularLocation>
</comment>
<comment type="miscellaneous">
    <text evidence="1">The basic functional RuBisCO is composed of a large chain homodimer in a 'head-to-tail' conformation. In form I RuBisCO this homodimer is arranged in a barrel-like tetramer with the small subunits forming a tetrameric 'cap' on each end of the 'barrel'.</text>
</comment>
<comment type="similarity">
    <text evidence="1">Belongs to the RuBisCO small chain family.</text>
</comment>
<accession>Q9XGX5</accession>